<name>FMT_SINMW</name>
<comment type="function">
    <text evidence="1">Attaches a formyl group to the free amino group of methionyl-tRNA(fMet). The formyl group appears to play a dual role in the initiator identity of N-formylmethionyl-tRNA by promoting its recognition by IF2 and preventing the misappropriation of this tRNA by the elongation apparatus.</text>
</comment>
<comment type="catalytic activity">
    <reaction evidence="1">
        <text>L-methionyl-tRNA(fMet) + (6R)-10-formyltetrahydrofolate = N-formyl-L-methionyl-tRNA(fMet) + (6S)-5,6,7,8-tetrahydrofolate + H(+)</text>
        <dbReference type="Rhea" id="RHEA:24380"/>
        <dbReference type="Rhea" id="RHEA-COMP:9952"/>
        <dbReference type="Rhea" id="RHEA-COMP:9953"/>
        <dbReference type="ChEBI" id="CHEBI:15378"/>
        <dbReference type="ChEBI" id="CHEBI:57453"/>
        <dbReference type="ChEBI" id="CHEBI:78530"/>
        <dbReference type="ChEBI" id="CHEBI:78844"/>
        <dbReference type="ChEBI" id="CHEBI:195366"/>
        <dbReference type="EC" id="2.1.2.9"/>
    </reaction>
</comment>
<comment type="similarity">
    <text evidence="1">Belongs to the Fmt family.</text>
</comment>
<gene>
    <name evidence="1" type="primary">fmt</name>
    <name type="ordered locus">Smed_0055</name>
</gene>
<sequence>MPLRIIFMGTPEFSVPTLLALAGAGHEIAAVYTQPPRPGGRRGLDLQKSPVHQAAERLDIPVLTPVNFKEAADRRTFRNFGADAAVVVAYGLLLPEEILSGTRCGCYNGHASLLPRWRGAAPIQRAIMAGDRETGMMVMKMDKGLDTGPVALARSVPIHATMTAGELHDRLSEVGAKLMTEAMARLEAGELPLTPQPQEGVVYAAKISKEETRIDFSRPAAEVHNHIRGLSPFPGAWFELDIAGRRERIKVLGSEISQGEGAPGQVLDGSLAIACGEGAVRLTRLQRAGGKALPAADFLRGTPIVASAGIG</sequence>
<protein>
    <recommendedName>
        <fullName evidence="1">Methionyl-tRNA formyltransferase</fullName>
        <ecNumber evidence="1">2.1.2.9</ecNumber>
    </recommendedName>
</protein>
<organism>
    <name type="scientific">Sinorhizobium medicae (strain WSM419)</name>
    <name type="common">Ensifer medicae</name>
    <dbReference type="NCBI Taxonomy" id="366394"/>
    <lineage>
        <taxon>Bacteria</taxon>
        <taxon>Pseudomonadati</taxon>
        <taxon>Pseudomonadota</taxon>
        <taxon>Alphaproteobacteria</taxon>
        <taxon>Hyphomicrobiales</taxon>
        <taxon>Rhizobiaceae</taxon>
        <taxon>Sinorhizobium/Ensifer group</taxon>
        <taxon>Sinorhizobium</taxon>
    </lineage>
</organism>
<reference key="1">
    <citation type="submission" date="2007-06" db="EMBL/GenBank/DDBJ databases">
        <title>Complete sequence of Sinorhizobium medicae WSM419 chromosome.</title>
        <authorList>
            <consortium name="US DOE Joint Genome Institute"/>
            <person name="Copeland A."/>
            <person name="Lucas S."/>
            <person name="Lapidus A."/>
            <person name="Barry K."/>
            <person name="Glavina del Rio T."/>
            <person name="Dalin E."/>
            <person name="Tice H."/>
            <person name="Pitluck S."/>
            <person name="Chain P."/>
            <person name="Malfatti S."/>
            <person name="Shin M."/>
            <person name="Vergez L."/>
            <person name="Schmutz J."/>
            <person name="Larimer F."/>
            <person name="Land M."/>
            <person name="Hauser L."/>
            <person name="Kyrpides N."/>
            <person name="Mikhailova N."/>
            <person name="Reeve W.G."/>
            <person name="Richardson P."/>
        </authorList>
    </citation>
    <scope>NUCLEOTIDE SEQUENCE [LARGE SCALE GENOMIC DNA]</scope>
    <source>
        <strain>WSM419</strain>
    </source>
</reference>
<keyword id="KW-0648">Protein biosynthesis</keyword>
<keyword id="KW-0808">Transferase</keyword>
<feature type="chain" id="PRO_1000020167" description="Methionyl-tRNA formyltransferase">
    <location>
        <begin position="1"/>
        <end position="311"/>
    </location>
</feature>
<feature type="binding site" evidence="1">
    <location>
        <begin position="112"/>
        <end position="115"/>
    </location>
    <ligand>
        <name>(6S)-5,6,7,8-tetrahydrofolate</name>
        <dbReference type="ChEBI" id="CHEBI:57453"/>
    </ligand>
</feature>
<evidence type="ECO:0000255" key="1">
    <source>
        <dbReference type="HAMAP-Rule" id="MF_00182"/>
    </source>
</evidence>
<proteinExistence type="inferred from homology"/>
<dbReference type="EC" id="2.1.2.9" evidence="1"/>
<dbReference type="EMBL" id="CP000738">
    <property type="protein sequence ID" value="ABR58915.1"/>
    <property type="molecule type" value="Genomic_DNA"/>
</dbReference>
<dbReference type="RefSeq" id="WP_011974269.1">
    <property type="nucleotide sequence ID" value="NC_009636.1"/>
</dbReference>
<dbReference type="RefSeq" id="YP_001325750.1">
    <property type="nucleotide sequence ID" value="NC_009636.1"/>
</dbReference>
<dbReference type="SMR" id="A6U5I5"/>
<dbReference type="STRING" id="366394.Smed_0055"/>
<dbReference type="GeneID" id="61611182"/>
<dbReference type="KEGG" id="smd:Smed_0055"/>
<dbReference type="PATRIC" id="fig|366394.8.peg.3110"/>
<dbReference type="eggNOG" id="COG0223">
    <property type="taxonomic scope" value="Bacteria"/>
</dbReference>
<dbReference type="HOGENOM" id="CLU_033347_1_2_5"/>
<dbReference type="OrthoDB" id="9802815at2"/>
<dbReference type="Proteomes" id="UP000001108">
    <property type="component" value="Chromosome"/>
</dbReference>
<dbReference type="GO" id="GO:0005829">
    <property type="term" value="C:cytosol"/>
    <property type="evidence" value="ECO:0007669"/>
    <property type="project" value="TreeGrafter"/>
</dbReference>
<dbReference type="GO" id="GO:0004479">
    <property type="term" value="F:methionyl-tRNA formyltransferase activity"/>
    <property type="evidence" value="ECO:0007669"/>
    <property type="project" value="UniProtKB-UniRule"/>
</dbReference>
<dbReference type="CDD" id="cd08646">
    <property type="entry name" value="FMT_core_Met-tRNA-FMT_N"/>
    <property type="match status" value="1"/>
</dbReference>
<dbReference type="CDD" id="cd08704">
    <property type="entry name" value="Met_tRNA_FMT_C"/>
    <property type="match status" value="1"/>
</dbReference>
<dbReference type="Gene3D" id="3.10.25.10">
    <property type="entry name" value="Formyl transferase, C-terminal domain"/>
    <property type="match status" value="1"/>
</dbReference>
<dbReference type="Gene3D" id="3.40.50.170">
    <property type="entry name" value="Formyl transferase, N-terminal domain"/>
    <property type="match status" value="1"/>
</dbReference>
<dbReference type="HAMAP" id="MF_00182">
    <property type="entry name" value="Formyl_trans"/>
    <property type="match status" value="1"/>
</dbReference>
<dbReference type="InterPro" id="IPR005794">
    <property type="entry name" value="Fmt"/>
</dbReference>
<dbReference type="InterPro" id="IPR005793">
    <property type="entry name" value="Formyl_trans_C"/>
</dbReference>
<dbReference type="InterPro" id="IPR037022">
    <property type="entry name" value="Formyl_trans_C_sf"/>
</dbReference>
<dbReference type="InterPro" id="IPR002376">
    <property type="entry name" value="Formyl_transf_N"/>
</dbReference>
<dbReference type="InterPro" id="IPR036477">
    <property type="entry name" value="Formyl_transf_N_sf"/>
</dbReference>
<dbReference type="InterPro" id="IPR011034">
    <property type="entry name" value="Formyl_transferase-like_C_sf"/>
</dbReference>
<dbReference type="InterPro" id="IPR001555">
    <property type="entry name" value="GART_AS"/>
</dbReference>
<dbReference type="InterPro" id="IPR044135">
    <property type="entry name" value="Met-tRNA-FMT_C"/>
</dbReference>
<dbReference type="InterPro" id="IPR041711">
    <property type="entry name" value="Met-tRNA-FMT_N"/>
</dbReference>
<dbReference type="NCBIfam" id="TIGR00460">
    <property type="entry name" value="fmt"/>
    <property type="match status" value="1"/>
</dbReference>
<dbReference type="PANTHER" id="PTHR11138">
    <property type="entry name" value="METHIONYL-TRNA FORMYLTRANSFERASE"/>
    <property type="match status" value="1"/>
</dbReference>
<dbReference type="PANTHER" id="PTHR11138:SF5">
    <property type="entry name" value="METHIONYL-TRNA FORMYLTRANSFERASE, MITOCHONDRIAL"/>
    <property type="match status" value="1"/>
</dbReference>
<dbReference type="Pfam" id="PF02911">
    <property type="entry name" value="Formyl_trans_C"/>
    <property type="match status" value="1"/>
</dbReference>
<dbReference type="Pfam" id="PF00551">
    <property type="entry name" value="Formyl_trans_N"/>
    <property type="match status" value="1"/>
</dbReference>
<dbReference type="SUPFAM" id="SSF50486">
    <property type="entry name" value="FMT C-terminal domain-like"/>
    <property type="match status" value="1"/>
</dbReference>
<dbReference type="SUPFAM" id="SSF53328">
    <property type="entry name" value="Formyltransferase"/>
    <property type="match status" value="1"/>
</dbReference>
<dbReference type="PROSITE" id="PS00373">
    <property type="entry name" value="GART"/>
    <property type="match status" value="1"/>
</dbReference>
<accession>A6U5I5</accession>